<feature type="chain" id="PRO_0000133232" description="Regulatory protein E2">
    <location>
        <begin position="1"/>
        <end position="367"/>
    </location>
</feature>
<feature type="region of interest" description="Transactivation domain" evidence="1">
    <location>
        <begin position="1"/>
        <end position="202"/>
    </location>
</feature>
<feature type="region of interest" description="Disordered" evidence="2">
    <location>
        <begin position="207"/>
        <end position="291"/>
    </location>
</feature>
<feature type="region of interest" description="DNA-binding domain" evidence="1">
    <location>
        <begin position="286"/>
        <end position="367"/>
    </location>
</feature>
<feature type="compositionally biased region" description="Polar residues" evidence="2">
    <location>
        <begin position="207"/>
        <end position="233"/>
    </location>
</feature>
<feature type="compositionally biased region" description="Polar residues" evidence="2">
    <location>
        <begin position="249"/>
        <end position="259"/>
    </location>
</feature>
<feature type="compositionally biased region" description="Basic and acidic residues" evidence="2">
    <location>
        <begin position="264"/>
        <end position="274"/>
    </location>
</feature>
<feature type="compositionally biased region" description="Polar residues" evidence="2">
    <location>
        <begin position="275"/>
        <end position="286"/>
    </location>
</feature>
<feature type="cross-link" description="Glycyl lysine isopeptide (Lys-Gly) (interchain with G-Cter in SUMO)" evidence="1">
    <location>
        <position position="293"/>
    </location>
</feature>
<reference key="1">
    <citation type="submission" date="1995-10" db="EMBL/GenBank/DDBJ databases">
        <authorList>
            <person name="Delius H."/>
        </authorList>
    </citation>
    <scope>NUCLEOTIDE SEQUENCE [GENOMIC DNA]</scope>
</reference>
<evidence type="ECO:0000255" key="1">
    <source>
        <dbReference type="HAMAP-Rule" id="MF_04001"/>
    </source>
</evidence>
<evidence type="ECO:0000256" key="2">
    <source>
        <dbReference type="SAM" id="MobiDB-lite"/>
    </source>
</evidence>
<sequence length="367" mass="41690">METLATRLDVCQERLLDLYEKDSNKLEDQIEHWKCIRLECALQYKAREMGYKVLQHQALPALAVSKGKGHKAIELQLALETLQKTVYSTEPWTLQDTCLERWNAPPTGCLKRRGQTVDVIFDGHQDNTMQYVMWGDIYYQNCDGEGWTKVCSNIDAMGIYYMDAEHKVYYVDFKKEASKYGEYGQWEVRMGSSIIFSPASVSSTEEALSISSTGTAEHTRPANSTPRTDNSTKAIPCTPPPRKRARVYSTDQQPHSTSDPVGCDNDRHISDDNNKNQGRHTSSGDTTPIVHFKGEPNTLKCFRQRIQKYKHLFEQASSTWHWACVPGTTKNRGIVTLTYSSVEQRQQFLVTVRIPPSISMSLGVMSL</sequence>
<protein>
    <recommendedName>
        <fullName evidence="1">Regulatory protein E2</fullName>
    </recommendedName>
</protein>
<gene>
    <name evidence="1" type="primary">E2</name>
</gene>
<organism>
    <name type="scientific">Human papillomavirus type 54</name>
    <dbReference type="NCBI Taxonomy" id="1671798"/>
    <lineage>
        <taxon>Viruses</taxon>
        <taxon>Monodnaviria</taxon>
        <taxon>Shotokuvirae</taxon>
        <taxon>Cossaviricota</taxon>
        <taxon>Papovaviricetes</taxon>
        <taxon>Zurhausenvirales</taxon>
        <taxon>Papillomaviridae</taxon>
        <taxon>Firstpapillomavirinae</taxon>
        <taxon>Alphapapillomavirus</taxon>
        <taxon>Alphapapillomavirus 13</taxon>
    </lineage>
</organism>
<accession>Q81021</accession>
<organismHost>
    <name type="scientific">Homo sapiens</name>
    <name type="common">Human</name>
    <dbReference type="NCBI Taxonomy" id="9606"/>
</organismHost>
<proteinExistence type="inferred from homology"/>
<keyword id="KW-0010">Activator</keyword>
<keyword id="KW-0235">DNA replication</keyword>
<keyword id="KW-0238">DNA-binding</keyword>
<keyword id="KW-0244">Early protein</keyword>
<keyword id="KW-1048">Host nucleus</keyword>
<keyword id="KW-1017">Isopeptide bond</keyword>
<keyword id="KW-0597">Phosphoprotein</keyword>
<keyword id="KW-1185">Reference proteome</keyword>
<keyword id="KW-0678">Repressor</keyword>
<keyword id="KW-0804">Transcription</keyword>
<keyword id="KW-0805">Transcription regulation</keyword>
<keyword id="KW-0832">Ubl conjugation</keyword>
<name>VE2_HPV54</name>
<dbReference type="EMBL" id="U37488">
    <property type="protein sequence ID" value="AAA79190.1"/>
    <property type="molecule type" value="Genomic_DNA"/>
</dbReference>
<dbReference type="RefSeq" id="NP_043291.1">
    <property type="nucleotide sequence ID" value="NC_001676.1"/>
</dbReference>
<dbReference type="SMR" id="Q81021"/>
<dbReference type="GeneID" id="1497435"/>
<dbReference type="KEGG" id="vg:1497435"/>
<dbReference type="OrthoDB" id="15886at10239"/>
<dbReference type="Proteomes" id="UP000007665">
    <property type="component" value="Segment"/>
</dbReference>
<dbReference type="GO" id="GO:0042025">
    <property type="term" value="C:host cell nucleus"/>
    <property type="evidence" value="ECO:0007669"/>
    <property type="project" value="UniProtKB-SubCell"/>
</dbReference>
<dbReference type="GO" id="GO:0003677">
    <property type="term" value="F:DNA binding"/>
    <property type="evidence" value="ECO:0007669"/>
    <property type="project" value="UniProtKB-UniRule"/>
</dbReference>
<dbReference type="GO" id="GO:0003700">
    <property type="term" value="F:DNA-binding transcription factor activity"/>
    <property type="evidence" value="ECO:0007669"/>
    <property type="project" value="UniProtKB-UniRule"/>
</dbReference>
<dbReference type="GO" id="GO:0000166">
    <property type="term" value="F:nucleotide binding"/>
    <property type="evidence" value="ECO:0007669"/>
    <property type="project" value="UniProtKB-UniRule"/>
</dbReference>
<dbReference type="GO" id="GO:0006260">
    <property type="term" value="P:DNA replication"/>
    <property type="evidence" value="ECO:0007669"/>
    <property type="project" value="UniProtKB-KW"/>
</dbReference>
<dbReference type="GO" id="GO:0006351">
    <property type="term" value="P:DNA-templated transcription"/>
    <property type="evidence" value="ECO:0007669"/>
    <property type="project" value="UniProtKB-UniRule"/>
</dbReference>
<dbReference type="GO" id="GO:0006275">
    <property type="term" value="P:regulation of DNA replication"/>
    <property type="evidence" value="ECO:0007669"/>
    <property type="project" value="UniProtKB-UniRule"/>
</dbReference>
<dbReference type="GO" id="GO:0039693">
    <property type="term" value="P:viral DNA genome replication"/>
    <property type="evidence" value="ECO:0007669"/>
    <property type="project" value="UniProtKB-UniRule"/>
</dbReference>
<dbReference type="Gene3D" id="3.30.70.330">
    <property type="match status" value="1"/>
</dbReference>
<dbReference type="Gene3D" id="1.10.287.30">
    <property type="entry name" value="E2 (early) protein, N terminal domain, subdomain 1"/>
    <property type="match status" value="1"/>
</dbReference>
<dbReference type="Gene3D" id="2.170.200.10">
    <property type="entry name" value="Papillomavirus E2 early protein domain"/>
    <property type="match status" value="1"/>
</dbReference>
<dbReference type="HAMAP" id="MF_04001">
    <property type="entry name" value="PPV_E2"/>
    <property type="match status" value="1"/>
</dbReference>
<dbReference type="InterPro" id="IPR035975">
    <property type="entry name" value="E2/EBNA1_C_sf"/>
</dbReference>
<dbReference type="InterPro" id="IPR012677">
    <property type="entry name" value="Nucleotide-bd_a/b_plait_sf"/>
</dbReference>
<dbReference type="InterPro" id="IPR000427">
    <property type="entry name" value="Papillomavirus_E2_C"/>
</dbReference>
<dbReference type="InterPro" id="IPR001866">
    <property type="entry name" value="PPV_E2_N"/>
</dbReference>
<dbReference type="InterPro" id="IPR033668">
    <property type="entry name" value="Reg_prot_E2"/>
</dbReference>
<dbReference type="InterPro" id="IPR036050">
    <property type="entry name" value="Regulatory_protein_E2_N"/>
</dbReference>
<dbReference type="InterPro" id="IPR042503">
    <property type="entry name" value="Regulatory_protein_E2_N_1"/>
</dbReference>
<dbReference type="InterPro" id="IPR042504">
    <property type="entry name" value="Regulatory_protein_E2_N_2"/>
</dbReference>
<dbReference type="Pfam" id="PF00511">
    <property type="entry name" value="PPV_E2_C"/>
    <property type="match status" value="1"/>
</dbReference>
<dbReference type="Pfam" id="PF00508">
    <property type="entry name" value="PPV_E2_N"/>
    <property type="match status" value="1"/>
</dbReference>
<dbReference type="SUPFAM" id="SSF51332">
    <property type="entry name" value="E2 regulatory, transactivation domain"/>
    <property type="match status" value="1"/>
</dbReference>
<dbReference type="SUPFAM" id="SSF54957">
    <property type="entry name" value="Viral DNA-binding domain"/>
    <property type="match status" value="1"/>
</dbReference>
<comment type="function">
    <text evidence="1">Plays a role in the initiation of viral DNA replication. A dimer of E2 interacts with a dimer of E1 in order to improve specificity of E1 DNA binding activity. Once the complex recognizes and binds DNA at specific sites, the E2 dimer is removed from DNA. E2 also regulates viral transcription through binding to the E2RE response element (5'-ACCNNNNNNGGT-3') present in multiple copies in the regulatory regions of the viral genome. Activates or represses transcription depending on E2RE's position with regards to proximal promoter elements including the TATA-box. Repression occurs by sterically hindering the assembly of the transcription initiation complex.</text>
</comment>
<comment type="subunit">
    <text evidence="1">Binds DNA as homodimer. Interacts with protein E1; this interaction greatly increases E1 DNA-binding activity. Interacts with protein L1; this interaction enhances E2-dependent replication and transcription activation. Interacts with protein L2; this interaction inhibits E2 transcriptional activity but not DNA replication function E2. Interacts with protein E7; this interaction inhibits E7 oncogenic activity. Interacts with host TAF1; this interaction modulates E2-dependent transcriptional regulation. Interacts with host BRD4; this interaction mediates E2 transcriptional activation function. Additionally, the interaction with host BRD4 on mitotic chromosomes mediates tethering of the viral genome. Interacts with host TOPBP1; this interaction is required for optimal viral DNA replication.</text>
</comment>
<comment type="subcellular location">
    <subcellularLocation>
        <location evidence="1">Host nucleus</location>
    </subcellularLocation>
</comment>
<comment type="PTM">
    <text evidence="1">Phosphorylated.</text>
</comment>
<comment type="PTM">
    <text evidence="1">Sumoylation plays a regulatory role in E2 transcriptional activity.</text>
</comment>
<comment type="similarity">
    <text evidence="1">Belongs to the papillomaviridae E2 protein family.</text>
</comment>